<evidence type="ECO:0000255" key="1">
    <source>
        <dbReference type="HAMAP-Rule" id="MF_00446"/>
    </source>
</evidence>
<proteinExistence type="inferred from homology"/>
<reference key="1">
    <citation type="submission" date="2007-02" db="EMBL/GenBank/DDBJ databases">
        <title>Complete sequence of Clostridium thermocellum ATCC 27405.</title>
        <authorList>
            <consortium name="US DOE Joint Genome Institute"/>
            <person name="Copeland A."/>
            <person name="Lucas S."/>
            <person name="Lapidus A."/>
            <person name="Barry K."/>
            <person name="Detter J.C."/>
            <person name="Glavina del Rio T."/>
            <person name="Hammon N."/>
            <person name="Israni S."/>
            <person name="Dalin E."/>
            <person name="Tice H."/>
            <person name="Pitluck S."/>
            <person name="Chertkov O."/>
            <person name="Brettin T."/>
            <person name="Bruce D."/>
            <person name="Han C."/>
            <person name="Tapia R."/>
            <person name="Gilna P."/>
            <person name="Schmutz J."/>
            <person name="Larimer F."/>
            <person name="Land M."/>
            <person name="Hauser L."/>
            <person name="Kyrpides N."/>
            <person name="Mikhailova N."/>
            <person name="Wu J.H.D."/>
            <person name="Newcomb M."/>
            <person name="Richardson P."/>
        </authorList>
    </citation>
    <scope>NUCLEOTIDE SEQUENCE [LARGE SCALE GENOMIC DNA]</scope>
    <source>
        <strain>ATCC 27405 / DSM 1237 / JCM 9322 / NBRC 103400 / NCIMB 10682 / NRRL B-4536 / VPI 7372</strain>
    </source>
</reference>
<protein>
    <recommendedName>
        <fullName evidence="1">Aspartate 1-decarboxylase</fullName>
        <ecNumber evidence="1">4.1.1.11</ecNumber>
    </recommendedName>
    <alternativeName>
        <fullName evidence="1">Aspartate alpha-decarboxylase</fullName>
    </alternativeName>
    <component>
        <recommendedName>
            <fullName evidence="1">Aspartate 1-decarboxylase beta chain</fullName>
        </recommendedName>
    </component>
    <component>
        <recommendedName>
            <fullName evidence="1">Aspartate 1-decarboxylase alpha chain</fullName>
        </recommendedName>
    </component>
</protein>
<sequence>MFITLMKSKIHRATVTEANLDYVGSITIDEDLMEAADIMENEKVQVVDNNNGNRFETYVIKGERGSGMICLNGAAARLVHPGDLIIIISYGIFDREEAKTFNPKVVFVDEKNKIINIKSEEKHGEI</sequence>
<comment type="function">
    <text evidence="1">Catalyzes the pyruvoyl-dependent decarboxylation of aspartate to produce beta-alanine.</text>
</comment>
<comment type="catalytic activity">
    <reaction evidence="1">
        <text>L-aspartate + H(+) = beta-alanine + CO2</text>
        <dbReference type="Rhea" id="RHEA:19497"/>
        <dbReference type="ChEBI" id="CHEBI:15378"/>
        <dbReference type="ChEBI" id="CHEBI:16526"/>
        <dbReference type="ChEBI" id="CHEBI:29991"/>
        <dbReference type="ChEBI" id="CHEBI:57966"/>
        <dbReference type="EC" id="4.1.1.11"/>
    </reaction>
</comment>
<comment type="cofactor">
    <cofactor evidence="1">
        <name>pyruvate</name>
        <dbReference type="ChEBI" id="CHEBI:15361"/>
    </cofactor>
    <text evidence="1">Binds 1 pyruvoyl group covalently per subunit.</text>
</comment>
<comment type="pathway">
    <text evidence="1">Cofactor biosynthesis; (R)-pantothenate biosynthesis; beta-alanine from L-aspartate: step 1/1.</text>
</comment>
<comment type="subunit">
    <text evidence="1">Heterooctamer of four alpha and four beta subunits.</text>
</comment>
<comment type="subcellular location">
    <subcellularLocation>
        <location evidence="1">Cytoplasm</location>
    </subcellularLocation>
</comment>
<comment type="PTM">
    <text evidence="1">Is synthesized initially as an inactive proenzyme, which is activated by self-cleavage at a specific serine bond to produce a beta-subunit with a hydroxyl group at its C-terminus and an alpha-subunit with a pyruvoyl group at its N-terminus.</text>
</comment>
<comment type="similarity">
    <text evidence="1">Belongs to the PanD family.</text>
</comment>
<accession>A3DDV5</accession>
<feature type="chain" id="PRO_0000306955" description="Aspartate 1-decarboxylase beta chain" evidence="1">
    <location>
        <begin position="1"/>
        <end position="24"/>
    </location>
</feature>
<feature type="chain" id="PRO_0000306956" description="Aspartate 1-decarboxylase alpha chain" evidence="1">
    <location>
        <begin position="25"/>
        <end position="126"/>
    </location>
</feature>
<feature type="active site" description="Schiff-base intermediate with substrate; via pyruvic acid" evidence="1">
    <location>
        <position position="25"/>
    </location>
</feature>
<feature type="active site" description="Proton donor" evidence="1">
    <location>
        <position position="58"/>
    </location>
</feature>
<feature type="binding site" evidence="1">
    <location>
        <position position="57"/>
    </location>
    <ligand>
        <name>substrate</name>
    </ligand>
</feature>
<feature type="binding site" evidence="1">
    <location>
        <begin position="73"/>
        <end position="75"/>
    </location>
    <ligand>
        <name>substrate</name>
    </ligand>
</feature>
<feature type="modified residue" description="Pyruvic acid (Ser)" evidence="1">
    <location>
        <position position="25"/>
    </location>
</feature>
<gene>
    <name evidence="1" type="primary">panD</name>
    <name type="ordered locus">Cthe_0900</name>
</gene>
<dbReference type="EC" id="4.1.1.11" evidence="1"/>
<dbReference type="EMBL" id="CP000568">
    <property type="protein sequence ID" value="ABN52134.1"/>
    <property type="molecule type" value="Genomic_DNA"/>
</dbReference>
<dbReference type="RefSeq" id="WP_003517255.1">
    <property type="nucleotide sequence ID" value="NC_009012.1"/>
</dbReference>
<dbReference type="SMR" id="A3DDV5"/>
<dbReference type="STRING" id="203119.Cthe_0900"/>
<dbReference type="GeneID" id="35803524"/>
<dbReference type="KEGG" id="cth:Cthe_0900"/>
<dbReference type="eggNOG" id="COG0853">
    <property type="taxonomic scope" value="Bacteria"/>
</dbReference>
<dbReference type="HOGENOM" id="CLU_115305_2_0_9"/>
<dbReference type="OrthoDB" id="9803983at2"/>
<dbReference type="UniPathway" id="UPA00028">
    <property type="reaction ID" value="UER00002"/>
</dbReference>
<dbReference type="Proteomes" id="UP000002145">
    <property type="component" value="Chromosome"/>
</dbReference>
<dbReference type="GO" id="GO:0005829">
    <property type="term" value="C:cytosol"/>
    <property type="evidence" value="ECO:0007669"/>
    <property type="project" value="TreeGrafter"/>
</dbReference>
<dbReference type="GO" id="GO:0004068">
    <property type="term" value="F:aspartate 1-decarboxylase activity"/>
    <property type="evidence" value="ECO:0007669"/>
    <property type="project" value="UniProtKB-UniRule"/>
</dbReference>
<dbReference type="GO" id="GO:0006523">
    <property type="term" value="P:alanine biosynthetic process"/>
    <property type="evidence" value="ECO:0007669"/>
    <property type="project" value="InterPro"/>
</dbReference>
<dbReference type="GO" id="GO:0015940">
    <property type="term" value="P:pantothenate biosynthetic process"/>
    <property type="evidence" value="ECO:0007669"/>
    <property type="project" value="UniProtKB-UniRule"/>
</dbReference>
<dbReference type="CDD" id="cd06919">
    <property type="entry name" value="Asp_decarbox"/>
    <property type="match status" value="1"/>
</dbReference>
<dbReference type="Gene3D" id="2.40.40.20">
    <property type="match status" value="1"/>
</dbReference>
<dbReference type="HAMAP" id="MF_00446">
    <property type="entry name" value="PanD"/>
    <property type="match status" value="1"/>
</dbReference>
<dbReference type="InterPro" id="IPR009010">
    <property type="entry name" value="Asp_de-COase-like_dom_sf"/>
</dbReference>
<dbReference type="InterPro" id="IPR003190">
    <property type="entry name" value="Asp_decarbox"/>
</dbReference>
<dbReference type="NCBIfam" id="TIGR00223">
    <property type="entry name" value="panD"/>
    <property type="match status" value="1"/>
</dbReference>
<dbReference type="PANTHER" id="PTHR21012">
    <property type="entry name" value="ASPARTATE 1-DECARBOXYLASE"/>
    <property type="match status" value="1"/>
</dbReference>
<dbReference type="PANTHER" id="PTHR21012:SF0">
    <property type="entry name" value="ASPARTATE 1-DECARBOXYLASE"/>
    <property type="match status" value="1"/>
</dbReference>
<dbReference type="Pfam" id="PF02261">
    <property type="entry name" value="Asp_decarbox"/>
    <property type="match status" value="1"/>
</dbReference>
<dbReference type="PIRSF" id="PIRSF006246">
    <property type="entry name" value="Asp_decarbox"/>
    <property type="match status" value="1"/>
</dbReference>
<dbReference type="SUPFAM" id="SSF50692">
    <property type="entry name" value="ADC-like"/>
    <property type="match status" value="1"/>
</dbReference>
<organism>
    <name type="scientific">Acetivibrio thermocellus (strain ATCC 27405 / DSM 1237 / JCM 9322 / NBRC 103400 / NCIMB 10682 / NRRL B-4536 / VPI 7372)</name>
    <name type="common">Clostridium thermocellum</name>
    <dbReference type="NCBI Taxonomy" id="203119"/>
    <lineage>
        <taxon>Bacteria</taxon>
        <taxon>Bacillati</taxon>
        <taxon>Bacillota</taxon>
        <taxon>Clostridia</taxon>
        <taxon>Eubacteriales</taxon>
        <taxon>Oscillospiraceae</taxon>
        <taxon>Acetivibrio</taxon>
    </lineage>
</organism>
<name>PAND_ACET2</name>
<keyword id="KW-0068">Autocatalytic cleavage</keyword>
<keyword id="KW-0963">Cytoplasm</keyword>
<keyword id="KW-0210">Decarboxylase</keyword>
<keyword id="KW-0456">Lyase</keyword>
<keyword id="KW-0566">Pantothenate biosynthesis</keyword>
<keyword id="KW-0670">Pyruvate</keyword>
<keyword id="KW-1185">Reference proteome</keyword>
<keyword id="KW-0704">Schiff base</keyword>
<keyword id="KW-0865">Zymogen</keyword>